<name>FOSL1_MOUSE</name>
<feature type="chain" id="PRO_0000076480" description="Fos-related antigen 1">
    <location>
        <begin position="1"/>
        <end position="273"/>
    </location>
</feature>
<feature type="domain" description="bZIP" evidence="4">
    <location>
        <begin position="105"/>
        <end position="168"/>
    </location>
</feature>
<feature type="region of interest" description="Disordered" evidence="5">
    <location>
        <begin position="1"/>
        <end position="46"/>
    </location>
</feature>
<feature type="region of interest" description="Disordered" evidence="5">
    <location>
        <begin position="60"/>
        <end position="114"/>
    </location>
</feature>
<feature type="region of interest" description="Basic motif" evidence="4">
    <location>
        <begin position="107"/>
        <end position="127"/>
    </location>
</feature>
<feature type="region of interest" description="Leucine-zipper" evidence="4">
    <location>
        <begin position="133"/>
        <end position="161"/>
    </location>
</feature>
<feature type="region of interest" description="Disordered" evidence="5">
    <location>
        <begin position="169"/>
        <end position="273"/>
    </location>
</feature>
<feature type="compositionally biased region" description="Low complexity" evidence="5">
    <location>
        <begin position="7"/>
        <end position="35"/>
    </location>
</feature>
<feature type="compositionally biased region" description="Basic and acidic residues" evidence="5">
    <location>
        <begin position="169"/>
        <end position="182"/>
    </location>
</feature>
<feature type="compositionally biased region" description="Low complexity" evidence="5">
    <location>
        <begin position="217"/>
        <end position="235"/>
    </location>
</feature>
<feature type="compositionally biased region" description="Low complexity" evidence="5">
    <location>
        <begin position="254"/>
        <end position="273"/>
    </location>
</feature>
<feature type="modified residue" description="Phosphoserine" evidence="1">
    <location>
        <position position="267"/>
    </location>
</feature>
<feature type="sequence conflict" description="In Ref. 1; AAC52888." evidence="7" ref="1">
    <original>P</original>
    <variation>A</variation>
    <location>
        <position position="17"/>
    </location>
</feature>
<feature type="sequence conflict" description="In Ref. 1; AAC52888." evidence="7" ref="1">
    <original>L</original>
    <variation>F</variation>
    <location>
        <position position="39"/>
    </location>
</feature>
<feature type="sequence conflict" description="In Ref. 1; AAC52888." evidence="7" ref="1">
    <original>P</original>
    <variation>L</variation>
    <location>
        <position position="170"/>
    </location>
</feature>
<feature type="sequence conflict" description="In Ref. 1; AAC52888." evidence="7" ref="1">
    <original>A</original>
    <variation>T</variation>
    <location>
        <position position="249"/>
    </location>
</feature>
<dbReference type="EMBL" id="U34245">
    <property type="protein sequence ID" value="AAC52888.1"/>
    <property type="molecule type" value="mRNA"/>
</dbReference>
<dbReference type="EMBL" id="AF017128">
    <property type="protein sequence ID" value="AAB71369.1"/>
    <property type="molecule type" value="Genomic_DNA"/>
</dbReference>
<dbReference type="CCDS" id="CCDS29464.1"/>
<dbReference type="RefSeq" id="NP_034365.1">
    <property type="nucleotide sequence ID" value="NM_010235.2"/>
</dbReference>
<dbReference type="SMR" id="P48755"/>
<dbReference type="ELM" id="P48755"/>
<dbReference type="FunCoup" id="P48755">
    <property type="interactions" value="967"/>
</dbReference>
<dbReference type="STRING" id="10090.ENSMUSP00000025850"/>
<dbReference type="GlyGen" id="P48755">
    <property type="glycosylation" value="1 site, 1 O-linked glycan (1 site)"/>
</dbReference>
<dbReference type="iPTMnet" id="P48755"/>
<dbReference type="PhosphoSitePlus" id="P48755"/>
<dbReference type="PaxDb" id="10090-ENSMUSP00000025850"/>
<dbReference type="PeptideAtlas" id="P48755"/>
<dbReference type="ProteomicsDB" id="271711"/>
<dbReference type="Pumba" id="P48755"/>
<dbReference type="Antibodypedia" id="3828">
    <property type="antibodies" value="400 antibodies from 39 providers"/>
</dbReference>
<dbReference type="DNASU" id="14283"/>
<dbReference type="Ensembl" id="ENSMUST00000025850.7">
    <property type="protein sequence ID" value="ENSMUSP00000025850.6"/>
    <property type="gene ID" value="ENSMUSG00000024912.7"/>
</dbReference>
<dbReference type="GeneID" id="14283"/>
<dbReference type="KEGG" id="mmu:14283"/>
<dbReference type="UCSC" id="uc008gdc.1">
    <property type="organism name" value="mouse"/>
</dbReference>
<dbReference type="AGR" id="MGI:107179"/>
<dbReference type="CTD" id="8061"/>
<dbReference type="MGI" id="MGI:107179">
    <property type="gene designation" value="Fosl1"/>
</dbReference>
<dbReference type="VEuPathDB" id="HostDB:ENSMUSG00000024912"/>
<dbReference type="eggNOG" id="KOG1414">
    <property type="taxonomic scope" value="Eukaryota"/>
</dbReference>
<dbReference type="GeneTree" id="ENSGT00940000160034"/>
<dbReference type="HOGENOM" id="CLU_049742_2_1_1"/>
<dbReference type="InParanoid" id="P48755"/>
<dbReference type="OMA" id="LEPADSC"/>
<dbReference type="OrthoDB" id="5866312at2759"/>
<dbReference type="PhylomeDB" id="P48755"/>
<dbReference type="TreeFam" id="TF326301"/>
<dbReference type="BioGRID-ORCS" id="14283">
    <property type="hits" value="4 hits in 78 CRISPR screens"/>
</dbReference>
<dbReference type="ChiTaRS" id="Fosl1">
    <property type="organism name" value="mouse"/>
</dbReference>
<dbReference type="PRO" id="PR:P48755"/>
<dbReference type="Proteomes" id="UP000000589">
    <property type="component" value="Chromosome 19"/>
</dbReference>
<dbReference type="RNAct" id="P48755">
    <property type="molecule type" value="protein"/>
</dbReference>
<dbReference type="Bgee" id="ENSMUSG00000024912">
    <property type="expression patterns" value="Expressed in ectoplacental cone and 45 other cell types or tissues"/>
</dbReference>
<dbReference type="ExpressionAtlas" id="P48755">
    <property type="expression patterns" value="baseline and differential"/>
</dbReference>
<dbReference type="GO" id="GO:0005654">
    <property type="term" value="C:nucleoplasm"/>
    <property type="evidence" value="ECO:0007669"/>
    <property type="project" value="Ensembl"/>
</dbReference>
<dbReference type="GO" id="GO:0090575">
    <property type="term" value="C:RNA polymerase II transcription regulator complex"/>
    <property type="evidence" value="ECO:0007669"/>
    <property type="project" value="Ensembl"/>
</dbReference>
<dbReference type="GO" id="GO:0003700">
    <property type="term" value="F:DNA-binding transcription factor activity"/>
    <property type="evidence" value="ECO:0007669"/>
    <property type="project" value="InterPro"/>
</dbReference>
<dbReference type="GO" id="GO:1990841">
    <property type="term" value="F:promoter-specific chromatin binding"/>
    <property type="evidence" value="ECO:0000314"/>
    <property type="project" value="MGI"/>
</dbReference>
<dbReference type="GO" id="GO:0000978">
    <property type="term" value="F:RNA polymerase II cis-regulatory region sequence-specific DNA binding"/>
    <property type="evidence" value="ECO:0007669"/>
    <property type="project" value="Ensembl"/>
</dbReference>
<dbReference type="GO" id="GO:0000977">
    <property type="term" value="F:RNA polymerase II transcription regulatory region sequence-specific DNA binding"/>
    <property type="evidence" value="ECO:0000314"/>
    <property type="project" value="MGI"/>
</dbReference>
<dbReference type="GO" id="GO:0019221">
    <property type="term" value="P:cytokine-mediated signaling pathway"/>
    <property type="evidence" value="ECO:0000315"/>
    <property type="project" value="MGI"/>
</dbReference>
<dbReference type="GO" id="GO:0010467">
    <property type="term" value="P:gene expression"/>
    <property type="evidence" value="ECO:0000315"/>
    <property type="project" value="MGI"/>
</dbReference>
<dbReference type="GO" id="GO:0001701">
    <property type="term" value="P:in utero embryonic development"/>
    <property type="evidence" value="ECO:0000315"/>
    <property type="project" value="MGI"/>
</dbReference>
<dbReference type="GO" id="GO:0006954">
    <property type="term" value="P:inflammatory response"/>
    <property type="evidence" value="ECO:0000315"/>
    <property type="project" value="MGI"/>
</dbReference>
<dbReference type="GO" id="GO:0060674">
    <property type="term" value="P:placenta blood vessel development"/>
    <property type="evidence" value="ECO:0000315"/>
    <property type="project" value="MGI"/>
</dbReference>
<dbReference type="GO" id="GO:2000144">
    <property type="term" value="P:positive regulation of DNA-templated transcription initiation"/>
    <property type="evidence" value="ECO:0007669"/>
    <property type="project" value="Ensembl"/>
</dbReference>
<dbReference type="GO" id="GO:1902895">
    <property type="term" value="P:positive regulation of miRNA transcription"/>
    <property type="evidence" value="ECO:0007669"/>
    <property type="project" value="Ensembl"/>
</dbReference>
<dbReference type="GO" id="GO:0006357">
    <property type="term" value="P:regulation of transcription by RNA polymerase II"/>
    <property type="evidence" value="ECO:0007669"/>
    <property type="project" value="InterPro"/>
</dbReference>
<dbReference type="GO" id="GO:0009611">
    <property type="term" value="P:response to wounding"/>
    <property type="evidence" value="ECO:0000315"/>
    <property type="project" value="MGI"/>
</dbReference>
<dbReference type="GO" id="GO:0002224">
    <property type="term" value="P:toll-like receptor signaling pathway"/>
    <property type="evidence" value="ECO:0000315"/>
    <property type="project" value="MGI"/>
</dbReference>
<dbReference type="GO" id="GO:0007296">
    <property type="term" value="P:vitellogenesis"/>
    <property type="evidence" value="ECO:0000315"/>
    <property type="project" value="MGI"/>
</dbReference>
<dbReference type="CDD" id="cd14721">
    <property type="entry name" value="bZIP_Fos"/>
    <property type="match status" value="1"/>
</dbReference>
<dbReference type="FunFam" id="1.20.5.170:FF:000006">
    <property type="entry name" value="fos-related antigen 2 isoform X1"/>
    <property type="match status" value="1"/>
</dbReference>
<dbReference type="Gene3D" id="1.20.5.170">
    <property type="match status" value="1"/>
</dbReference>
<dbReference type="InterPro" id="IPR000837">
    <property type="entry name" value="AP-1"/>
</dbReference>
<dbReference type="InterPro" id="IPR004827">
    <property type="entry name" value="bZIP"/>
</dbReference>
<dbReference type="InterPro" id="IPR046347">
    <property type="entry name" value="bZIP_sf"/>
</dbReference>
<dbReference type="PANTHER" id="PTHR23351">
    <property type="entry name" value="FOS TRANSCRIPTION FACTOR-RELATED"/>
    <property type="match status" value="1"/>
</dbReference>
<dbReference type="PANTHER" id="PTHR23351:SF6">
    <property type="entry name" value="FOS-RELATED ANTIGEN 1"/>
    <property type="match status" value="1"/>
</dbReference>
<dbReference type="Pfam" id="PF00170">
    <property type="entry name" value="bZIP_1"/>
    <property type="match status" value="1"/>
</dbReference>
<dbReference type="PRINTS" id="PR00042">
    <property type="entry name" value="LEUZIPPRFOS"/>
</dbReference>
<dbReference type="SMART" id="SM00338">
    <property type="entry name" value="BRLZ"/>
    <property type="match status" value="1"/>
</dbReference>
<dbReference type="SUPFAM" id="SSF57959">
    <property type="entry name" value="Leucine zipper domain"/>
    <property type="match status" value="1"/>
</dbReference>
<dbReference type="PROSITE" id="PS50217">
    <property type="entry name" value="BZIP"/>
    <property type="match status" value="1"/>
</dbReference>
<dbReference type="PROSITE" id="PS00036">
    <property type="entry name" value="BZIP_BASIC"/>
    <property type="match status" value="1"/>
</dbReference>
<organism>
    <name type="scientific">Mus musculus</name>
    <name type="common">Mouse</name>
    <dbReference type="NCBI Taxonomy" id="10090"/>
    <lineage>
        <taxon>Eukaryota</taxon>
        <taxon>Metazoa</taxon>
        <taxon>Chordata</taxon>
        <taxon>Craniata</taxon>
        <taxon>Vertebrata</taxon>
        <taxon>Euteleostomi</taxon>
        <taxon>Mammalia</taxon>
        <taxon>Eutheria</taxon>
        <taxon>Euarchontoglires</taxon>
        <taxon>Glires</taxon>
        <taxon>Rodentia</taxon>
        <taxon>Myomorpha</taxon>
        <taxon>Muroidea</taxon>
        <taxon>Muridae</taxon>
        <taxon>Murinae</taxon>
        <taxon>Mus</taxon>
        <taxon>Mus</taxon>
    </lineage>
</organism>
<protein>
    <recommendedName>
        <fullName>Fos-related antigen 1</fullName>
        <shortName>FRA-1</shortName>
    </recommendedName>
</protein>
<reference key="1">
    <citation type="journal article" date="1996" name="J. Immunol.">
        <title>Isolation and characterization of murine fra-1: induction mediated by CD40 and surface Ig is protein kinase C dependent.</title>
        <authorList>
            <person name="Huo L."/>
            <person name="Rothstein T.L."/>
        </authorList>
    </citation>
    <scope>NUCLEOTIDE SEQUENCE [MRNA]</scope>
    <source>
        <strain>BALB/cByJ</strain>
        <tissue>Spleen</tissue>
    </source>
</reference>
<reference key="2">
    <citation type="journal article" date="1997" name="Oncogene">
        <title>Structure and chromosomal assignment of the mouse fra-1 gene, and its exclusion as a candidate gene for oc (osteosclerosis).</title>
        <authorList>
            <person name="Schreiber M."/>
            <person name="Poirier C."/>
            <person name="Franchi A."/>
            <person name="Kurzbauer R."/>
            <person name="Guenet J.-L."/>
            <person name="Carle G.F."/>
            <person name="Wagner E.F."/>
        </authorList>
    </citation>
    <scope>NUCLEOTIDE SEQUENCE [GENOMIC DNA]</scope>
    <source>
        <strain>129/Sv</strain>
    </source>
</reference>
<reference key="3">
    <citation type="journal article" date="2017" name="Mol. Cell">
        <title>AP-1 Transcription Factors and the BAF Complex Mediate Signal-Dependent Enhancer Selection.</title>
        <authorList>
            <person name="Vierbuchen T."/>
            <person name="Ling E."/>
            <person name="Cowley C.J."/>
            <person name="Couch C.H."/>
            <person name="Wang X."/>
            <person name="Harmin D.A."/>
            <person name="Roberts C.W.M."/>
            <person name="Greenberg M.E."/>
        </authorList>
    </citation>
    <scope>INTERACTION WITH SMARCB1; SMARCD1; ARID1A AND JUN</scope>
</reference>
<keyword id="KW-0238">DNA-binding</keyword>
<keyword id="KW-0539">Nucleus</keyword>
<keyword id="KW-0597">Phosphoprotein</keyword>
<keyword id="KW-1185">Reference proteome</keyword>
<comment type="subunit">
    <text evidence="2 6">Heterodimer (By similarity). Interacts with the BAF multiprotein chromatin-remodeling complex subunits SMARCB1 and SMARCD1 (PubMed:29272704). Interacts with ARID1A and JUN (PubMed:29272704).</text>
</comment>
<comment type="subcellular location">
    <subcellularLocation>
        <location evidence="3">Nucleus</location>
    </subcellularLocation>
</comment>
<comment type="similarity">
    <text evidence="7">Belongs to the bZIP family. Fos subfamily.</text>
</comment>
<evidence type="ECO:0000250" key="1">
    <source>
        <dbReference type="UniProtKB" id="P15407"/>
    </source>
</evidence>
<evidence type="ECO:0000250" key="2">
    <source>
        <dbReference type="UniProtKB" id="P47930"/>
    </source>
</evidence>
<evidence type="ECO:0000250" key="3">
    <source>
        <dbReference type="UniProtKB" id="P51145"/>
    </source>
</evidence>
<evidence type="ECO:0000255" key="4">
    <source>
        <dbReference type="PROSITE-ProRule" id="PRU00978"/>
    </source>
</evidence>
<evidence type="ECO:0000256" key="5">
    <source>
        <dbReference type="SAM" id="MobiDB-lite"/>
    </source>
</evidence>
<evidence type="ECO:0000269" key="6">
    <source>
    </source>
</evidence>
<evidence type="ECO:0000305" key="7"/>
<proteinExistence type="evidence at protein level"/>
<gene>
    <name type="primary">Fosl1</name>
    <name type="synonym">Fra1</name>
</gene>
<sequence length="273" mass="29800">MYRDYGEPGPSSGAGSPYGRPAQPPQAQAQTAQQQKFHLVPSIDSSSQELHWMVQPHFLGPTGYPRPLAYPQYSPPQPRPGVIRALGPPPGVRRRPCEQISPEEEERRRVRRERNKLAAAKCRNRRKELTDFLQAETDKLEDEKSGLQREIEELQKQKERLELVLEAHRPICKIPEGDKKDPGGSGSTSGASSPPAPGRPVPCISLSPGPVLEPEALHTPTLMTTPSLTPFTPSLVFTYPSTPEPCSSAHRKSSSSSGDPSSDPLGSPTLLAL</sequence>
<accession>P48755</accession>
<accession>O35285</accession>